<accession>Q8L4M1</accession>
<accession>O64576</accession>
<organism>
    <name type="scientific">Arabidopsis thaliana</name>
    <name type="common">Mouse-ear cress</name>
    <dbReference type="NCBI Taxonomy" id="3702"/>
    <lineage>
        <taxon>Eukaryota</taxon>
        <taxon>Viridiplantae</taxon>
        <taxon>Streptophyta</taxon>
        <taxon>Embryophyta</taxon>
        <taxon>Tracheophyta</taxon>
        <taxon>Spermatophyta</taxon>
        <taxon>Magnoliopsida</taxon>
        <taxon>eudicotyledons</taxon>
        <taxon>Gunneridae</taxon>
        <taxon>Pentapetalae</taxon>
        <taxon>rosids</taxon>
        <taxon>malvids</taxon>
        <taxon>Brassicales</taxon>
        <taxon>Brassicaceae</taxon>
        <taxon>Camelineae</taxon>
        <taxon>Arabidopsis</taxon>
    </lineage>
</organism>
<sequence length="367" mass="40073">MYGDATNWNEDEYRESILKEREIETRTVFRTAWAPPARISNPDAFVVASSDGTLAFHSLNSLVSQSASFGYSKGQDVMVAEPERVVRAHEGPAYDVKFYGEDEDALLLSCGDDGRVRGWKWREFAESDVSLHLKENHLKPLLELINPQHKGPWGALSPMPEINAMSVDPQSGSVFTAAGDSCAYCWDVESGKIKMTFKGHSDYLHTVVSRSSASQILTGSEDGTARIWDCKTGKCVKVIGSQDKKSRLRVSSMALDGSESWLVCGQGKNLALWNLPASECVQTIPIPAHVQDVMFDEKQILTVGAEPLLRRFDLNGALLSQIHCAPCSVFSISLHPAGVVAVGGYGGIVDVISQFGSHLCTFRSSSL</sequence>
<feature type="chain" id="PRO_0000396857" description="THO complex subunit 6">
    <location>
        <begin position="1"/>
        <end position="367"/>
    </location>
</feature>
<feature type="repeat" description="WD 1">
    <location>
        <begin position="23"/>
        <end position="67"/>
    </location>
</feature>
<feature type="repeat" description="WD 2">
    <location>
        <begin position="88"/>
        <end position="129"/>
    </location>
</feature>
<feature type="repeat" description="WD 3">
    <location>
        <begin position="157"/>
        <end position="196"/>
    </location>
</feature>
<feature type="repeat" description="WD 4">
    <location>
        <begin position="199"/>
        <end position="240"/>
    </location>
</feature>
<feature type="repeat" description="WD 5">
    <location>
        <begin position="243"/>
        <end position="283"/>
    </location>
</feature>
<feature type="repeat" description="WD 6">
    <location>
        <begin position="285"/>
        <end position="322"/>
    </location>
</feature>
<feature type="repeat" description="WD 7">
    <location>
        <begin position="324"/>
        <end position="363"/>
    </location>
</feature>
<gene>
    <name type="primary">THO6</name>
    <name type="synonym">DWA1</name>
    <name type="synonym">THOC6</name>
    <name type="ordered locus">At2g19430</name>
    <name type="ORF">F27F23.25</name>
</gene>
<comment type="function">
    <text evidence="1">Acts as a component of the THO subcomplex of the TREX complex which is thought to couple mRNA transcription, processing and nuclear export.</text>
</comment>
<comment type="function">
    <text evidence="2">Component of the CUL4-RBX1-DDB1-DWA1/DWA2 E3 ubiquitin-protein ligase complex that acts as a negative regulator in abscisic acid (ABA) signaling. May function as the substrate recognition module within this complex leading to ABI5 degradation. Functionally redundant with DWA2.</text>
</comment>
<comment type="pathway">
    <text>Protein modification; protein ubiquitination.</text>
</comment>
<comment type="subunit">
    <text evidence="2 3">Component of the THO complex, which is composed of THO1, THO2, THO3, THO5, THO6 and THO7. Interacts with ABI5, DDB1A and DWA2.</text>
</comment>
<comment type="interaction">
    <interactant intactId="EBI-941035">
        <id>Q8L4M1</id>
    </interactant>
    <interactant intactId="EBI-1632780">
        <id>Q9M0V3</id>
        <label>DDB1A</label>
    </interactant>
    <organismsDiffer>false</organismsDiffer>
    <experiments>2</experiments>
</comment>
<comment type="subcellular location">
    <subcellularLocation>
        <location evidence="2">Nucleus</location>
    </subcellularLocation>
</comment>
<comment type="disruption phenotype">
    <text evidence="2">Increased sensitivity to abscisic acid (ABA) and salt.</text>
</comment>
<comment type="similarity">
    <text evidence="4">Belongs to the WD repeat THOC6 family.</text>
</comment>
<comment type="sequence caution" evidence="4">
    <conflict type="erroneous gene model prediction">
        <sequence resource="EMBL-CDS" id="AAD10142"/>
    </conflict>
</comment>
<comment type="sequence caution" evidence="4">
    <conflict type="erroneous gene model prediction">
        <sequence resource="EMBL-CDS" id="AAM14874"/>
    </conflict>
</comment>
<protein>
    <recommendedName>
        <fullName>THO complex subunit 6</fullName>
        <shortName>AtTHO6</shortName>
    </recommendedName>
    <alternativeName>
        <fullName>Protein DWD HYPERSENSITIVE TO ABA 1</fullName>
    </alternativeName>
    <alternativeName>
        <fullName>WD repeat-containing protein DWA1</fullName>
    </alternativeName>
</protein>
<dbReference type="EMBL" id="AC003058">
    <property type="protein sequence ID" value="AAM14874.1"/>
    <property type="status" value="ALT_SEQ"/>
    <property type="molecule type" value="Genomic_DNA"/>
</dbReference>
<dbReference type="EMBL" id="AC005917">
    <property type="protein sequence ID" value="AAD10142.1"/>
    <property type="status" value="ALT_SEQ"/>
    <property type="molecule type" value="Genomic_DNA"/>
</dbReference>
<dbReference type="EMBL" id="CP002685">
    <property type="protein sequence ID" value="AEC06880.1"/>
    <property type="molecule type" value="Genomic_DNA"/>
</dbReference>
<dbReference type="EMBL" id="AY099718">
    <property type="protein sequence ID" value="AAM20569.1"/>
    <property type="molecule type" value="mRNA"/>
</dbReference>
<dbReference type="EMBL" id="AY128879">
    <property type="protein sequence ID" value="AAM91279.1"/>
    <property type="molecule type" value="mRNA"/>
</dbReference>
<dbReference type="PIR" id="T01291">
    <property type="entry name" value="T01291"/>
</dbReference>
<dbReference type="RefSeq" id="NP_849989.1">
    <property type="nucleotide sequence ID" value="NM_179658.4"/>
</dbReference>
<dbReference type="SMR" id="Q8L4M1"/>
<dbReference type="BioGRID" id="1817">
    <property type="interactions" value="22"/>
</dbReference>
<dbReference type="FunCoup" id="Q8L4M1">
    <property type="interactions" value="3749"/>
</dbReference>
<dbReference type="IntAct" id="Q8L4M1">
    <property type="interactions" value="6"/>
</dbReference>
<dbReference type="STRING" id="3702.Q8L4M1"/>
<dbReference type="PaxDb" id="3702-AT2G19430.1"/>
<dbReference type="ProteomicsDB" id="234370"/>
<dbReference type="EnsemblPlants" id="AT2G19430.1">
    <property type="protein sequence ID" value="AT2G19430.1"/>
    <property type="gene ID" value="AT2G19430"/>
</dbReference>
<dbReference type="GeneID" id="816462"/>
<dbReference type="Gramene" id="AT2G19430.1">
    <property type="protein sequence ID" value="AT2G19430.1"/>
    <property type="gene ID" value="AT2G19430"/>
</dbReference>
<dbReference type="KEGG" id="ath:AT2G19430"/>
<dbReference type="Araport" id="AT2G19430"/>
<dbReference type="TAIR" id="AT2G19430">
    <property type="gene designation" value="DWA1"/>
</dbReference>
<dbReference type="eggNOG" id="KOG0649">
    <property type="taxonomic scope" value="Eukaryota"/>
</dbReference>
<dbReference type="HOGENOM" id="CLU_060667_0_0_1"/>
<dbReference type="InParanoid" id="Q8L4M1"/>
<dbReference type="OMA" id="FTEDWLL"/>
<dbReference type="OrthoDB" id="273067at2759"/>
<dbReference type="PhylomeDB" id="Q8L4M1"/>
<dbReference type="UniPathway" id="UPA00143"/>
<dbReference type="PRO" id="PR:Q8L4M1"/>
<dbReference type="Proteomes" id="UP000006548">
    <property type="component" value="Chromosome 2"/>
</dbReference>
<dbReference type="ExpressionAtlas" id="Q8L4M1">
    <property type="expression patterns" value="baseline and differential"/>
</dbReference>
<dbReference type="GO" id="GO:0080008">
    <property type="term" value="C:Cul4-RING E3 ubiquitin ligase complex"/>
    <property type="evidence" value="ECO:0000353"/>
    <property type="project" value="TAIR"/>
</dbReference>
<dbReference type="GO" id="GO:0005739">
    <property type="term" value="C:mitochondrion"/>
    <property type="evidence" value="ECO:0007005"/>
    <property type="project" value="TAIR"/>
</dbReference>
<dbReference type="GO" id="GO:0005634">
    <property type="term" value="C:nucleus"/>
    <property type="evidence" value="ECO:0000314"/>
    <property type="project" value="UniProtKB"/>
</dbReference>
<dbReference type="GO" id="GO:0000347">
    <property type="term" value="C:THO complex"/>
    <property type="evidence" value="ECO:0000314"/>
    <property type="project" value="UniProtKB"/>
</dbReference>
<dbReference type="GO" id="GO:0003723">
    <property type="term" value="F:RNA binding"/>
    <property type="evidence" value="ECO:0007669"/>
    <property type="project" value="UniProtKB-KW"/>
</dbReference>
<dbReference type="GO" id="GO:0009738">
    <property type="term" value="P:abscisic acid-activated signaling pathway"/>
    <property type="evidence" value="ECO:0007669"/>
    <property type="project" value="UniProtKB-KW"/>
</dbReference>
<dbReference type="GO" id="GO:0006397">
    <property type="term" value="P:mRNA processing"/>
    <property type="evidence" value="ECO:0007669"/>
    <property type="project" value="UniProtKB-KW"/>
</dbReference>
<dbReference type="GO" id="GO:0051028">
    <property type="term" value="P:mRNA transport"/>
    <property type="evidence" value="ECO:0007669"/>
    <property type="project" value="UniProtKB-KW"/>
</dbReference>
<dbReference type="GO" id="GO:0009788">
    <property type="term" value="P:negative regulation of abscisic acid-activated signaling pathway"/>
    <property type="evidence" value="ECO:0000315"/>
    <property type="project" value="UniProtKB"/>
</dbReference>
<dbReference type="GO" id="GO:0016567">
    <property type="term" value="P:protein ubiquitination"/>
    <property type="evidence" value="ECO:0000315"/>
    <property type="project" value="UniProtKB"/>
</dbReference>
<dbReference type="GO" id="GO:0031047">
    <property type="term" value="P:regulatory ncRNA-mediated gene silencing"/>
    <property type="evidence" value="ECO:0000315"/>
    <property type="project" value="TAIR"/>
</dbReference>
<dbReference type="GO" id="GO:0008380">
    <property type="term" value="P:RNA splicing"/>
    <property type="evidence" value="ECO:0007669"/>
    <property type="project" value="UniProtKB-KW"/>
</dbReference>
<dbReference type="GO" id="GO:0010267">
    <property type="term" value="P:ta-siRNA processing"/>
    <property type="evidence" value="ECO:0000315"/>
    <property type="project" value="TAIR"/>
</dbReference>
<dbReference type="FunFam" id="2.130.10.10:FF:001793">
    <property type="entry name" value="THO complex subunit 6"/>
    <property type="match status" value="1"/>
</dbReference>
<dbReference type="Gene3D" id="2.130.10.10">
    <property type="entry name" value="YVTN repeat-like/Quinoprotein amine dehydrogenase"/>
    <property type="match status" value="2"/>
</dbReference>
<dbReference type="InterPro" id="IPR042626">
    <property type="entry name" value="THOC6"/>
</dbReference>
<dbReference type="InterPro" id="IPR015943">
    <property type="entry name" value="WD40/YVTN_repeat-like_dom_sf"/>
</dbReference>
<dbReference type="InterPro" id="IPR036322">
    <property type="entry name" value="WD40_repeat_dom_sf"/>
</dbReference>
<dbReference type="InterPro" id="IPR001680">
    <property type="entry name" value="WD40_rpt"/>
</dbReference>
<dbReference type="PANTHER" id="PTHR44411">
    <property type="entry name" value="THO COMPLEX SUBUNIT 6 HOMOLOG"/>
    <property type="match status" value="1"/>
</dbReference>
<dbReference type="PANTHER" id="PTHR44411:SF1">
    <property type="entry name" value="THO COMPLEX SUBUNIT 6 HOMOLOG"/>
    <property type="match status" value="1"/>
</dbReference>
<dbReference type="Pfam" id="PF00400">
    <property type="entry name" value="WD40"/>
    <property type="match status" value="1"/>
</dbReference>
<dbReference type="SMART" id="SM00320">
    <property type="entry name" value="WD40"/>
    <property type="match status" value="5"/>
</dbReference>
<dbReference type="SUPFAM" id="SSF50978">
    <property type="entry name" value="WD40 repeat-like"/>
    <property type="match status" value="1"/>
</dbReference>
<dbReference type="PROSITE" id="PS00678">
    <property type="entry name" value="WD_REPEATS_1"/>
    <property type="match status" value="1"/>
</dbReference>
<dbReference type="PROSITE" id="PS50082">
    <property type="entry name" value="WD_REPEATS_2"/>
    <property type="match status" value="1"/>
</dbReference>
<dbReference type="PROSITE" id="PS50294">
    <property type="entry name" value="WD_REPEATS_REGION"/>
    <property type="match status" value="1"/>
</dbReference>
<keyword id="KW-0938">Abscisic acid signaling pathway</keyword>
<keyword id="KW-0507">mRNA processing</keyword>
<keyword id="KW-0508">mRNA splicing</keyword>
<keyword id="KW-0509">mRNA transport</keyword>
<keyword id="KW-0539">Nucleus</keyword>
<keyword id="KW-1185">Reference proteome</keyword>
<keyword id="KW-0677">Repeat</keyword>
<keyword id="KW-0694">RNA-binding</keyword>
<keyword id="KW-0813">Transport</keyword>
<keyword id="KW-0833">Ubl conjugation pathway</keyword>
<keyword id="KW-0853">WD repeat</keyword>
<name>THOC6_ARATH</name>
<proteinExistence type="evidence at protein level"/>
<evidence type="ECO:0000250" key="1"/>
<evidence type="ECO:0000269" key="2">
    <source>
    </source>
</evidence>
<evidence type="ECO:0000269" key="3">
    <source>
    </source>
</evidence>
<evidence type="ECO:0000305" key="4"/>
<reference key="1">
    <citation type="journal article" date="1999" name="Nature">
        <title>Sequence and analysis of chromosome 2 of the plant Arabidopsis thaliana.</title>
        <authorList>
            <person name="Lin X."/>
            <person name="Kaul S."/>
            <person name="Rounsley S.D."/>
            <person name="Shea T.P."/>
            <person name="Benito M.-I."/>
            <person name="Town C.D."/>
            <person name="Fujii C.Y."/>
            <person name="Mason T.M."/>
            <person name="Bowman C.L."/>
            <person name="Barnstead M.E."/>
            <person name="Feldblyum T.V."/>
            <person name="Buell C.R."/>
            <person name="Ketchum K.A."/>
            <person name="Lee J.J."/>
            <person name="Ronning C.M."/>
            <person name="Koo H.L."/>
            <person name="Moffat K.S."/>
            <person name="Cronin L.A."/>
            <person name="Shen M."/>
            <person name="Pai G."/>
            <person name="Van Aken S."/>
            <person name="Umayam L."/>
            <person name="Tallon L.J."/>
            <person name="Gill J.E."/>
            <person name="Adams M.D."/>
            <person name="Carrera A.J."/>
            <person name="Creasy T.H."/>
            <person name="Goodman H.M."/>
            <person name="Somerville C.R."/>
            <person name="Copenhaver G.P."/>
            <person name="Preuss D."/>
            <person name="Nierman W.C."/>
            <person name="White O."/>
            <person name="Eisen J.A."/>
            <person name="Salzberg S.L."/>
            <person name="Fraser C.M."/>
            <person name="Venter J.C."/>
        </authorList>
    </citation>
    <scope>NUCLEOTIDE SEQUENCE [LARGE SCALE GENOMIC DNA]</scope>
    <source>
        <strain>cv. Columbia</strain>
    </source>
</reference>
<reference key="2">
    <citation type="journal article" date="2017" name="Plant J.">
        <title>Araport11: a complete reannotation of the Arabidopsis thaliana reference genome.</title>
        <authorList>
            <person name="Cheng C.Y."/>
            <person name="Krishnakumar V."/>
            <person name="Chan A.P."/>
            <person name="Thibaud-Nissen F."/>
            <person name="Schobel S."/>
            <person name="Town C.D."/>
        </authorList>
    </citation>
    <scope>GENOME REANNOTATION</scope>
    <source>
        <strain>cv. Columbia</strain>
    </source>
</reference>
<reference key="3">
    <citation type="journal article" date="2003" name="Science">
        <title>Empirical analysis of transcriptional activity in the Arabidopsis genome.</title>
        <authorList>
            <person name="Yamada K."/>
            <person name="Lim J."/>
            <person name="Dale J.M."/>
            <person name="Chen H."/>
            <person name="Shinn P."/>
            <person name="Palm C.J."/>
            <person name="Southwick A.M."/>
            <person name="Wu H.C."/>
            <person name="Kim C.J."/>
            <person name="Nguyen M."/>
            <person name="Pham P.K."/>
            <person name="Cheuk R.F."/>
            <person name="Karlin-Newmann G."/>
            <person name="Liu S.X."/>
            <person name="Lam B."/>
            <person name="Sakano H."/>
            <person name="Wu T."/>
            <person name="Yu G."/>
            <person name="Miranda M."/>
            <person name="Quach H.L."/>
            <person name="Tripp M."/>
            <person name="Chang C.H."/>
            <person name="Lee J.M."/>
            <person name="Toriumi M.J."/>
            <person name="Chan M.M."/>
            <person name="Tang C.C."/>
            <person name="Onodera C.S."/>
            <person name="Deng J.M."/>
            <person name="Akiyama K."/>
            <person name="Ansari Y."/>
            <person name="Arakawa T."/>
            <person name="Banh J."/>
            <person name="Banno F."/>
            <person name="Bowser L."/>
            <person name="Brooks S.Y."/>
            <person name="Carninci P."/>
            <person name="Chao Q."/>
            <person name="Choy N."/>
            <person name="Enju A."/>
            <person name="Goldsmith A.D."/>
            <person name="Gurjal M."/>
            <person name="Hansen N.F."/>
            <person name="Hayashizaki Y."/>
            <person name="Johnson-Hopson C."/>
            <person name="Hsuan V.W."/>
            <person name="Iida K."/>
            <person name="Karnes M."/>
            <person name="Khan S."/>
            <person name="Koesema E."/>
            <person name="Ishida J."/>
            <person name="Jiang P.X."/>
            <person name="Jones T."/>
            <person name="Kawai J."/>
            <person name="Kamiya A."/>
            <person name="Meyers C."/>
            <person name="Nakajima M."/>
            <person name="Narusaka M."/>
            <person name="Seki M."/>
            <person name="Sakurai T."/>
            <person name="Satou M."/>
            <person name="Tamse R."/>
            <person name="Vaysberg M."/>
            <person name="Wallender E.K."/>
            <person name="Wong C."/>
            <person name="Yamamura Y."/>
            <person name="Yuan S."/>
            <person name="Shinozaki K."/>
            <person name="Davis R.W."/>
            <person name="Theologis A."/>
            <person name="Ecker J.R."/>
        </authorList>
    </citation>
    <scope>NUCLEOTIDE SEQUENCE [LARGE SCALE MRNA]</scope>
    <source>
        <strain>cv. Columbia</strain>
    </source>
</reference>
<reference key="4">
    <citation type="journal article" date="2010" name="Plant Cell">
        <title>DWA1 and DWA2, two Arabidopsis DWD protein components of CUL4-based E3 ligases, act together as negative regulators in aba signal transduction.</title>
        <authorList>
            <person name="Lee J.H."/>
            <person name="Yoon H.J."/>
            <person name="Terzaghi W."/>
            <person name="Martinez C."/>
            <person name="Dai M."/>
            <person name="Li J."/>
            <person name="Byun M.O."/>
            <person name="Deng X.W."/>
        </authorList>
    </citation>
    <scope>FUNCTION</scope>
    <scope>COMPONENT OF THE CUL4-RBX1-DDB1-DWA1 COMPLEX</scope>
    <scope>INTERACTION WITH ABI5; DDB1A AND DWA2</scope>
    <scope>SUBCELLULAR LOCATION</scope>
    <scope>DISRUPTION PHENOTYPE</scope>
</reference>
<reference key="5">
    <citation type="journal article" date="2010" name="Proc. Natl. Acad. Sci. U.S.A.">
        <title>Putative Arabidopsis THO/TREX mRNA export complex is involved in transgene and endogenous siRNA biosynthesis.</title>
        <authorList>
            <person name="Yelina N.E."/>
            <person name="Smith L.M."/>
            <person name="Jones A.M."/>
            <person name="Patel K."/>
            <person name="Kelly K.A."/>
            <person name="Baulcombe D.C."/>
        </authorList>
    </citation>
    <scope>IDENTIFICATION BY MASS SPECTROMETRY</scope>
    <scope>SUBUNIT</scope>
</reference>